<gene>
    <name evidence="1" type="primary">murQ</name>
    <name type="ordered locus">MW0165</name>
</gene>
<accession>Q7A1Y2</accession>
<keyword id="KW-0119">Carbohydrate metabolism</keyword>
<keyword id="KW-0456">Lyase</keyword>
<dbReference type="EC" id="4.2.1.126" evidence="1"/>
<dbReference type="EMBL" id="BA000033">
    <property type="protein sequence ID" value="BAB94030.1"/>
    <property type="molecule type" value="Genomic_DNA"/>
</dbReference>
<dbReference type="SMR" id="Q7A1Y2"/>
<dbReference type="KEGG" id="sam:MW0165"/>
<dbReference type="HOGENOM" id="CLU_049049_1_1_9"/>
<dbReference type="UniPathway" id="UPA00342"/>
<dbReference type="GO" id="GO:0097367">
    <property type="term" value="F:carbohydrate derivative binding"/>
    <property type="evidence" value="ECO:0007669"/>
    <property type="project" value="InterPro"/>
</dbReference>
<dbReference type="GO" id="GO:0016835">
    <property type="term" value="F:carbon-oxygen lyase activity"/>
    <property type="evidence" value="ECO:0007669"/>
    <property type="project" value="UniProtKB-UniRule"/>
</dbReference>
<dbReference type="GO" id="GO:0016803">
    <property type="term" value="F:ether hydrolase activity"/>
    <property type="evidence" value="ECO:0007669"/>
    <property type="project" value="TreeGrafter"/>
</dbReference>
<dbReference type="GO" id="GO:0046348">
    <property type="term" value="P:amino sugar catabolic process"/>
    <property type="evidence" value="ECO:0007669"/>
    <property type="project" value="InterPro"/>
</dbReference>
<dbReference type="GO" id="GO:0097173">
    <property type="term" value="P:N-acetylmuramic acid catabolic process"/>
    <property type="evidence" value="ECO:0007669"/>
    <property type="project" value="UniProtKB-UniPathway"/>
</dbReference>
<dbReference type="GO" id="GO:0009254">
    <property type="term" value="P:peptidoglycan turnover"/>
    <property type="evidence" value="ECO:0007669"/>
    <property type="project" value="TreeGrafter"/>
</dbReference>
<dbReference type="CDD" id="cd05007">
    <property type="entry name" value="SIS_Etherase"/>
    <property type="match status" value="1"/>
</dbReference>
<dbReference type="FunFam" id="1.10.8.1080:FF:000001">
    <property type="entry name" value="N-acetylmuramic acid 6-phosphate etherase"/>
    <property type="match status" value="1"/>
</dbReference>
<dbReference type="FunFam" id="3.40.50.10490:FF:000014">
    <property type="entry name" value="N-acetylmuramic acid 6-phosphate etherase"/>
    <property type="match status" value="1"/>
</dbReference>
<dbReference type="Gene3D" id="1.10.8.1080">
    <property type="match status" value="1"/>
</dbReference>
<dbReference type="Gene3D" id="3.40.50.10490">
    <property type="entry name" value="Glucose-6-phosphate isomerase like protein, domain 1"/>
    <property type="match status" value="1"/>
</dbReference>
<dbReference type="HAMAP" id="MF_00068">
    <property type="entry name" value="MurQ"/>
    <property type="match status" value="1"/>
</dbReference>
<dbReference type="InterPro" id="IPR005488">
    <property type="entry name" value="Etherase_MurQ"/>
</dbReference>
<dbReference type="InterPro" id="IPR005486">
    <property type="entry name" value="Glucokinase_regulatory_CS"/>
</dbReference>
<dbReference type="InterPro" id="IPR040190">
    <property type="entry name" value="MURQ/GCKR"/>
</dbReference>
<dbReference type="InterPro" id="IPR000408">
    <property type="entry name" value="Reg_chr_condens"/>
</dbReference>
<dbReference type="InterPro" id="IPR001347">
    <property type="entry name" value="SIS_dom"/>
</dbReference>
<dbReference type="InterPro" id="IPR046348">
    <property type="entry name" value="SIS_dom_sf"/>
</dbReference>
<dbReference type="NCBIfam" id="TIGR00274">
    <property type="entry name" value="N-acetylmuramic acid 6-phosphate etherase"/>
    <property type="match status" value="1"/>
</dbReference>
<dbReference type="NCBIfam" id="NF003915">
    <property type="entry name" value="PRK05441.1"/>
    <property type="match status" value="1"/>
</dbReference>
<dbReference type="NCBIfam" id="NF009222">
    <property type="entry name" value="PRK12570.1"/>
    <property type="match status" value="1"/>
</dbReference>
<dbReference type="PANTHER" id="PTHR10088">
    <property type="entry name" value="GLUCOKINASE REGULATORY PROTEIN"/>
    <property type="match status" value="1"/>
</dbReference>
<dbReference type="PANTHER" id="PTHR10088:SF4">
    <property type="entry name" value="GLUCOKINASE REGULATORY PROTEIN"/>
    <property type="match status" value="1"/>
</dbReference>
<dbReference type="Pfam" id="PF22645">
    <property type="entry name" value="GKRP_SIS_N"/>
    <property type="match status" value="1"/>
</dbReference>
<dbReference type="SUPFAM" id="SSF53697">
    <property type="entry name" value="SIS domain"/>
    <property type="match status" value="1"/>
</dbReference>
<dbReference type="PROSITE" id="PS01272">
    <property type="entry name" value="GCKR"/>
    <property type="match status" value="1"/>
</dbReference>
<dbReference type="PROSITE" id="PS51464">
    <property type="entry name" value="SIS"/>
    <property type="match status" value="1"/>
</dbReference>
<sequence length="299" mass="32382">MMENSTTEARNEATMHLDEMTVEEALITMNKEDQQVPLAVRKAIPQLTKVIKKTIAQYKKGGRLIYIGAGTSGRLGVLDAAECVPTFNTDPHEIIGIIAGGQHAMTMAVEGAEDHKKLAEEDLKNIDLTSKDVVIGIAASGKTPYVIGGLTFANTIGATTVSISCNEHAVISEIAQYPVEVKVGPEVLTGSTRLKSGTAQKLILNMISTITMVGVGKVYDNLMIDVKATNQKLIDRSVRIIQEICAITYDEAMALYQVSEHDVKVATVMGMCGISKEEATRRLLNNGDIVKRAIRDRQP</sequence>
<organism>
    <name type="scientific">Staphylococcus aureus (strain MW2)</name>
    <dbReference type="NCBI Taxonomy" id="196620"/>
    <lineage>
        <taxon>Bacteria</taxon>
        <taxon>Bacillati</taxon>
        <taxon>Bacillota</taxon>
        <taxon>Bacilli</taxon>
        <taxon>Bacillales</taxon>
        <taxon>Staphylococcaceae</taxon>
        <taxon>Staphylococcus</taxon>
    </lineage>
</organism>
<feature type="chain" id="PRO_0000249658" description="N-acetylmuramic acid 6-phosphate etherase">
    <location>
        <begin position="1"/>
        <end position="299"/>
    </location>
</feature>
<feature type="domain" description="SIS" evidence="1">
    <location>
        <begin position="54"/>
        <end position="217"/>
    </location>
</feature>
<feature type="active site" description="Proton donor" evidence="1">
    <location>
        <position position="82"/>
    </location>
</feature>
<feature type="active site" evidence="1">
    <location>
        <position position="113"/>
    </location>
</feature>
<protein>
    <recommendedName>
        <fullName evidence="1">N-acetylmuramic acid 6-phosphate etherase</fullName>
        <shortName evidence="1">MurNAc-6-P etherase</shortName>
        <ecNumber evidence="1">4.2.1.126</ecNumber>
    </recommendedName>
    <alternativeName>
        <fullName evidence="1">N-acetylmuramic acid 6-phosphate hydrolase</fullName>
    </alternativeName>
    <alternativeName>
        <fullName evidence="1">N-acetylmuramic acid 6-phosphate lyase</fullName>
    </alternativeName>
</protein>
<comment type="function">
    <text evidence="1">Specifically catalyzes the cleavage of the D-lactyl ether substituent of MurNAc 6-phosphate, producing GlcNAc 6-phosphate and D-lactate.</text>
</comment>
<comment type="catalytic activity">
    <reaction evidence="1">
        <text>N-acetyl-D-muramate 6-phosphate + H2O = N-acetyl-D-glucosamine 6-phosphate + (R)-lactate</text>
        <dbReference type="Rhea" id="RHEA:26410"/>
        <dbReference type="ChEBI" id="CHEBI:15377"/>
        <dbReference type="ChEBI" id="CHEBI:16004"/>
        <dbReference type="ChEBI" id="CHEBI:57513"/>
        <dbReference type="ChEBI" id="CHEBI:58722"/>
        <dbReference type="EC" id="4.2.1.126"/>
    </reaction>
</comment>
<comment type="pathway">
    <text evidence="1">Amino-sugar metabolism; N-acetylmuramate degradation.</text>
</comment>
<comment type="subunit">
    <text evidence="1">Homodimer.</text>
</comment>
<comment type="miscellaneous">
    <text evidence="1">A lyase-type mechanism (elimination/hydration) is suggested for the cleavage of the lactyl ether bond of MurNAc 6-phosphate, with the formation of an alpha,beta-unsaturated aldehyde intermediate with (E)-stereochemistry, followed by the syn addition of water to give product.</text>
</comment>
<comment type="similarity">
    <text evidence="1">Belongs to the GCKR-like family. MurNAc-6-P etherase subfamily.</text>
</comment>
<name>MURQ_STAAW</name>
<proteinExistence type="inferred from homology"/>
<evidence type="ECO:0000255" key="1">
    <source>
        <dbReference type="HAMAP-Rule" id="MF_00068"/>
    </source>
</evidence>
<reference key="1">
    <citation type="journal article" date="2002" name="Lancet">
        <title>Genome and virulence determinants of high virulence community-acquired MRSA.</title>
        <authorList>
            <person name="Baba T."/>
            <person name="Takeuchi F."/>
            <person name="Kuroda M."/>
            <person name="Yuzawa H."/>
            <person name="Aoki K."/>
            <person name="Oguchi A."/>
            <person name="Nagai Y."/>
            <person name="Iwama N."/>
            <person name="Asano K."/>
            <person name="Naimi T."/>
            <person name="Kuroda H."/>
            <person name="Cui L."/>
            <person name="Yamamoto K."/>
            <person name="Hiramatsu K."/>
        </authorList>
    </citation>
    <scope>NUCLEOTIDE SEQUENCE [LARGE SCALE GENOMIC DNA]</scope>
    <source>
        <strain>MW2</strain>
    </source>
</reference>